<dbReference type="EMBL" id="X83276">
    <property type="protein sequence ID" value="CAA58248.1"/>
    <property type="molecule type" value="Genomic_DNA"/>
</dbReference>
<dbReference type="EMBL" id="X99000">
    <property type="protein sequence ID" value="CAA67470.1"/>
    <property type="molecule type" value="Genomic_DNA"/>
</dbReference>
<dbReference type="EMBL" id="Z74247">
    <property type="protein sequence ID" value="CAA98776.1"/>
    <property type="molecule type" value="Genomic_DNA"/>
</dbReference>
<dbReference type="EMBL" id="BK006938">
    <property type="protein sequence ID" value="DAA11665.1"/>
    <property type="molecule type" value="Genomic_DNA"/>
</dbReference>
<dbReference type="PIR" id="S58778">
    <property type="entry name" value="S58778"/>
</dbReference>
<dbReference type="RefSeq" id="NP_010082.1">
    <property type="nucleotide sequence ID" value="NM_001180259.1"/>
</dbReference>
<dbReference type="SMR" id="Q12407"/>
<dbReference type="BioGRID" id="31847">
    <property type="interactions" value="54"/>
</dbReference>
<dbReference type="DIP" id="DIP-8956N"/>
<dbReference type="FunCoup" id="Q12407">
    <property type="interactions" value="139"/>
</dbReference>
<dbReference type="IntAct" id="Q12407">
    <property type="interactions" value="2"/>
</dbReference>
<dbReference type="MINT" id="Q12407"/>
<dbReference type="STRING" id="4932.YDL199C"/>
<dbReference type="TCDB" id="2.A.1.1.94">
    <property type="family name" value="the major facilitator superfamily (mfs)"/>
</dbReference>
<dbReference type="iPTMnet" id="Q12407"/>
<dbReference type="PaxDb" id="4932-YDL199C"/>
<dbReference type="PeptideAtlas" id="Q12407"/>
<dbReference type="EnsemblFungi" id="YDL199C_mRNA">
    <property type="protein sequence ID" value="YDL199C"/>
    <property type="gene ID" value="YDL199C"/>
</dbReference>
<dbReference type="GeneID" id="851328"/>
<dbReference type="KEGG" id="sce:YDL199C"/>
<dbReference type="AGR" id="SGD:S000002358"/>
<dbReference type="SGD" id="S000002358">
    <property type="gene designation" value="YDL199C"/>
</dbReference>
<dbReference type="VEuPathDB" id="FungiDB:YDL199C"/>
<dbReference type="eggNOG" id="KOG0254">
    <property type="taxonomic scope" value="Eukaryota"/>
</dbReference>
<dbReference type="HOGENOM" id="CLU_025465_0_0_1"/>
<dbReference type="InParanoid" id="Q12407"/>
<dbReference type="OMA" id="WINCAFR"/>
<dbReference type="OrthoDB" id="648285at2759"/>
<dbReference type="BioCyc" id="YEAST:G3O-29583-MONOMER"/>
<dbReference type="BioGRID-ORCS" id="851328">
    <property type="hits" value="0 hits in 10 CRISPR screens"/>
</dbReference>
<dbReference type="PRO" id="PR:Q12407"/>
<dbReference type="Proteomes" id="UP000002311">
    <property type="component" value="Chromosome IV"/>
</dbReference>
<dbReference type="RNAct" id="Q12407">
    <property type="molecule type" value="protein"/>
</dbReference>
<dbReference type="GO" id="GO:0000329">
    <property type="term" value="C:fungal-type vacuole membrane"/>
    <property type="evidence" value="ECO:0007005"/>
    <property type="project" value="SGD"/>
</dbReference>
<dbReference type="GO" id="GO:0016020">
    <property type="term" value="C:membrane"/>
    <property type="evidence" value="ECO:0000250"/>
    <property type="project" value="SGD"/>
</dbReference>
<dbReference type="GO" id="GO:0005351">
    <property type="term" value="F:carbohydrate:proton symporter activity"/>
    <property type="evidence" value="ECO:0000318"/>
    <property type="project" value="GO_Central"/>
</dbReference>
<dbReference type="GO" id="GO:0022857">
    <property type="term" value="F:transmembrane transporter activity"/>
    <property type="evidence" value="ECO:0000250"/>
    <property type="project" value="SGD"/>
</dbReference>
<dbReference type="GO" id="GO:0008643">
    <property type="term" value="P:carbohydrate transport"/>
    <property type="evidence" value="ECO:0000318"/>
    <property type="project" value="GO_Central"/>
</dbReference>
<dbReference type="GO" id="GO:0055085">
    <property type="term" value="P:transmembrane transport"/>
    <property type="evidence" value="ECO:0000250"/>
    <property type="project" value="SGD"/>
</dbReference>
<dbReference type="FunFam" id="1.20.1250.20:FF:000757">
    <property type="entry name" value="YDL199C-like protein"/>
    <property type="match status" value="1"/>
</dbReference>
<dbReference type="Gene3D" id="1.20.1250.20">
    <property type="entry name" value="MFS general substrate transporter like domains"/>
    <property type="match status" value="1"/>
</dbReference>
<dbReference type="InterPro" id="IPR020846">
    <property type="entry name" value="MFS_dom"/>
</dbReference>
<dbReference type="InterPro" id="IPR005828">
    <property type="entry name" value="MFS_sugar_transport-like"/>
</dbReference>
<dbReference type="InterPro" id="IPR050360">
    <property type="entry name" value="MFS_Sugar_Transporters"/>
</dbReference>
<dbReference type="InterPro" id="IPR036259">
    <property type="entry name" value="MFS_trans_sf"/>
</dbReference>
<dbReference type="InterPro" id="IPR003663">
    <property type="entry name" value="Sugar/inositol_transpt"/>
</dbReference>
<dbReference type="InterPro" id="IPR005829">
    <property type="entry name" value="Sugar_transporter_CS"/>
</dbReference>
<dbReference type="PANTHER" id="PTHR48022:SF73">
    <property type="entry name" value="METABOLITE TRANSPORT PROTEIN YDL199C-RELATED"/>
    <property type="match status" value="1"/>
</dbReference>
<dbReference type="PANTHER" id="PTHR48022">
    <property type="entry name" value="PLASTIDIC GLUCOSE TRANSPORTER 4"/>
    <property type="match status" value="1"/>
</dbReference>
<dbReference type="Pfam" id="PF00083">
    <property type="entry name" value="Sugar_tr"/>
    <property type="match status" value="1"/>
</dbReference>
<dbReference type="PRINTS" id="PR00171">
    <property type="entry name" value="SUGRTRNSPORT"/>
</dbReference>
<dbReference type="SUPFAM" id="SSF103473">
    <property type="entry name" value="MFS general substrate transporter"/>
    <property type="match status" value="1"/>
</dbReference>
<dbReference type="PROSITE" id="PS50850">
    <property type="entry name" value="MFS"/>
    <property type="match status" value="1"/>
</dbReference>
<dbReference type="PROSITE" id="PS00217">
    <property type="entry name" value="SUGAR_TRANSPORT_2"/>
    <property type="match status" value="1"/>
</dbReference>
<organism>
    <name type="scientific">Saccharomyces cerevisiae (strain ATCC 204508 / S288c)</name>
    <name type="common">Baker's yeast</name>
    <dbReference type="NCBI Taxonomy" id="559292"/>
    <lineage>
        <taxon>Eukaryota</taxon>
        <taxon>Fungi</taxon>
        <taxon>Dikarya</taxon>
        <taxon>Ascomycota</taxon>
        <taxon>Saccharomycotina</taxon>
        <taxon>Saccharomycetes</taxon>
        <taxon>Saccharomycetales</taxon>
        <taxon>Saccharomycetaceae</taxon>
        <taxon>Saccharomyces</taxon>
    </lineage>
</organism>
<proteinExistence type="evidence at protein level"/>
<accession>Q12407</accession>
<accession>D6VRF5</accession>
<name>YD199_YEAST</name>
<comment type="interaction">
    <interactant intactId="EBI-33162">
        <id>Q12407</id>
    </interactant>
    <interactant intactId="EBI-8659">
        <id>P02829</id>
        <label>HSP82</label>
    </interactant>
    <organismsDiffer>false</organismsDiffer>
    <experiments>2</experiments>
</comment>
<comment type="subcellular location">
    <subcellularLocation>
        <location>Membrane</location>
        <topology>Multi-pass membrane protein</topology>
    </subcellularLocation>
</comment>
<comment type="similarity">
    <text evidence="3">Belongs to the major facilitator superfamily. Sugar transporter (TC 2.A.1.1) family.</text>
</comment>
<gene>
    <name type="ordered locus">YDL199C</name>
    <name type="ORF">D1209</name>
</gene>
<sequence>MKPPLNMSRSNKPLTQEANSSAHIDRAHQLAQDFNSKQDDTALTSLPHKNPDIFRFENNITAHSSRRGSLYRDSDATVVLPLSEHTPRLSMDDPYRQLLQQAEISQLRSKKKRHSSRVLRTSFISFVVLVSSLSGLDQGLISGNVMTLSFQKYFHYPLTSPLGNIVSIVNLGAFMASLFVYSGILEPCSRKKMLQISTMIYSLGAIVQVLALNQWCLLLGRFLLGVGMGFAFSMVIIYQFEFPLPCIRKRTLISIQCVSSVIAYSFGIWINCAFRYLGFAWRYPLSTHVALGIILNLMSFYLILESPSWLLKQKNDVEALVLISNVFDDGNFEENQTQLKFRVLKRDILLKSHLQKNSYPYAYILKDFSSIIKLLIGFQLLTRTNGVDAFLYYSPLILQQMGRGERKSIYLTGLNALIYSIVILAYVPLVLRKRKEKTNVLLGSIVMCALLFTISFTDWFPKSTTRYISILFAVFLFTHFISWDSIGWVMTIELLPHLSQAPVILLVSNFYWIFKWFVSLITPILIDRLSWKFYLIPSLSSFISIIFVLKIFPIETRDERLDSDDDSTGNGSGNHDDVFDDTGSEFSSSPSFSAYQINTLGSSIKQNNQAYSSIQNEQILPKNGNLSNQTHGSAQNVYFITSDSGPSRTGEFFSFHNRTDPNISDNIAANKPSSGGGQNSPGDMAVA</sequence>
<reference key="1">
    <citation type="journal article" date="1995" name="Yeast">
        <title>New open reading frames, one of which is similar to the nifV gene of Azotobacter vinelandii, found on a 12.5 kbp fragment of chromosome IV of Saccharomyces cerevisiae.</title>
        <authorList>
            <person name="Verhasselt P."/>
            <person name="Voet M."/>
            <person name="Volckaert G."/>
        </authorList>
    </citation>
    <scope>NUCLEOTIDE SEQUENCE [GENOMIC DNA]</scope>
    <source>
        <strain>ATCC 96604 / S288c / FY1679</strain>
    </source>
</reference>
<reference key="2">
    <citation type="journal article" date="1997" name="Yeast">
        <title>The nucleotide sequence of a 39 kb segment of yeast chromosome IV: 12 new open reading frames, nine known genes and one gene for Gly-tRNA.</title>
        <authorList>
            <person name="Bahr A."/>
            <person name="Moeller-Rieker S."/>
            <person name="Hankeln T."/>
            <person name="Kraemer C."/>
            <person name="Protin U."/>
            <person name="Schmidt E.R."/>
        </authorList>
    </citation>
    <scope>NUCLEOTIDE SEQUENCE [GENOMIC DNA]</scope>
    <source>
        <strain>ATCC 96604 / S288c / FY1679</strain>
    </source>
</reference>
<reference key="3">
    <citation type="journal article" date="1997" name="Nature">
        <title>The nucleotide sequence of Saccharomyces cerevisiae chromosome IV.</title>
        <authorList>
            <person name="Jacq C."/>
            <person name="Alt-Moerbe J."/>
            <person name="Andre B."/>
            <person name="Arnold W."/>
            <person name="Bahr A."/>
            <person name="Ballesta J.P.G."/>
            <person name="Bargues M."/>
            <person name="Baron L."/>
            <person name="Becker A."/>
            <person name="Biteau N."/>
            <person name="Bloecker H."/>
            <person name="Blugeon C."/>
            <person name="Boskovic J."/>
            <person name="Brandt P."/>
            <person name="Brueckner M."/>
            <person name="Buitrago M.J."/>
            <person name="Coster F."/>
            <person name="Delaveau T."/>
            <person name="del Rey F."/>
            <person name="Dujon B."/>
            <person name="Eide L.G."/>
            <person name="Garcia-Cantalejo J.M."/>
            <person name="Goffeau A."/>
            <person name="Gomez-Peris A."/>
            <person name="Granotier C."/>
            <person name="Hanemann V."/>
            <person name="Hankeln T."/>
            <person name="Hoheisel J.D."/>
            <person name="Jaeger W."/>
            <person name="Jimenez A."/>
            <person name="Jonniaux J.-L."/>
            <person name="Kraemer C."/>
            <person name="Kuester H."/>
            <person name="Laamanen P."/>
            <person name="Legros Y."/>
            <person name="Louis E.J."/>
            <person name="Moeller-Rieker S."/>
            <person name="Monnet A."/>
            <person name="Moro M."/>
            <person name="Mueller-Auer S."/>
            <person name="Nussbaumer B."/>
            <person name="Paricio N."/>
            <person name="Paulin L."/>
            <person name="Perea J."/>
            <person name="Perez-Alonso M."/>
            <person name="Perez-Ortin J.E."/>
            <person name="Pohl T.M."/>
            <person name="Prydz H."/>
            <person name="Purnelle B."/>
            <person name="Rasmussen S.W."/>
            <person name="Remacha M.A."/>
            <person name="Revuelta J.L."/>
            <person name="Rieger M."/>
            <person name="Salom D."/>
            <person name="Saluz H.P."/>
            <person name="Saiz J.E."/>
            <person name="Saren A.-M."/>
            <person name="Schaefer M."/>
            <person name="Scharfe M."/>
            <person name="Schmidt E.R."/>
            <person name="Schneider C."/>
            <person name="Scholler P."/>
            <person name="Schwarz S."/>
            <person name="Soler-Mira A."/>
            <person name="Urrestarazu L.A."/>
            <person name="Verhasselt P."/>
            <person name="Vissers S."/>
            <person name="Voet M."/>
            <person name="Volckaert G."/>
            <person name="Wagner G."/>
            <person name="Wambutt R."/>
            <person name="Wedler E."/>
            <person name="Wedler H."/>
            <person name="Woelfl S."/>
            <person name="Harris D.E."/>
            <person name="Bowman S."/>
            <person name="Brown D."/>
            <person name="Churcher C.M."/>
            <person name="Connor R."/>
            <person name="Dedman K."/>
            <person name="Gentles S."/>
            <person name="Hamlin N."/>
            <person name="Hunt S."/>
            <person name="Jones L."/>
            <person name="McDonald S."/>
            <person name="Murphy L.D."/>
            <person name="Niblett D."/>
            <person name="Odell C."/>
            <person name="Oliver K."/>
            <person name="Rajandream M.A."/>
            <person name="Richards C."/>
            <person name="Shore L."/>
            <person name="Walsh S.V."/>
            <person name="Barrell B.G."/>
            <person name="Dietrich F.S."/>
            <person name="Mulligan J.T."/>
            <person name="Allen E."/>
            <person name="Araujo R."/>
            <person name="Aviles E."/>
            <person name="Berno A."/>
            <person name="Carpenter J."/>
            <person name="Chen E."/>
            <person name="Cherry J.M."/>
            <person name="Chung E."/>
            <person name="Duncan M."/>
            <person name="Hunicke-Smith S."/>
            <person name="Hyman R.W."/>
            <person name="Komp C."/>
            <person name="Lashkari D."/>
            <person name="Lew H."/>
            <person name="Lin D."/>
            <person name="Mosedale D."/>
            <person name="Nakahara K."/>
            <person name="Namath A."/>
            <person name="Oefner P."/>
            <person name="Oh C."/>
            <person name="Petel F.X."/>
            <person name="Roberts D."/>
            <person name="Schramm S."/>
            <person name="Schroeder M."/>
            <person name="Shogren T."/>
            <person name="Shroff N."/>
            <person name="Winant A."/>
            <person name="Yelton M.A."/>
            <person name="Botstein D."/>
            <person name="Davis R.W."/>
            <person name="Johnston M."/>
            <person name="Andrews S."/>
            <person name="Brinkman R."/>
            <person name="Cooper J."/>
            <person name="Ding H."/>
            <person name="Du Z."/>
            <person name="Favello A."/>
            <person name="Fulton L."/>
            <person name="Gattung S."/>
            <person name="Greco T."/>
            <person name="Hallsworth K."/>
            <person name="Hawkins J."/>
            <person name="Hillier L.W."/>
            <person name="Jier M."/>
            <person name="Johnson D."/>
            <person name="Johnston L."/>
            <person name="Kirsten J."/>
            <person name="Kucaba T."/>
            <person name="Langston Y."/>
            <person name="Latreille P."/>
            <person name="Le T."/>
            <person name="Mardis E."/>
            <person name="Menezes S."/>
            <person name="Miller N."/>
            <person name="Nhan M."/>
            <person name="Pauley A."/>
            <person name="Peluso D."/>
            <person name="Rifkin L."/>
            <person name="Riles L."/>
            <person name="Taich A."/>
            <person name="Trevaskis E."/>
            <person name="Vignati D."/>
            <person name="Wilcox L."/>
            <person name="Wohldman P."/>
            <person name="Vaudin M."/>
            <person name="Wilson R."/>
            <person name="Waterston R."/>
            <person name="Albermann K."/>
            <person name="Hani J."/>
            <person name="Heumann K."/>
            <person name="Kleine K."/>
            <person name="Mewes H.-W."/>
            <person name="Zollner A."/>
            <person name="Zaccaria P."/>
        </authorList>
    </citation>
    <scope>NUCLEOTIDE SEQUENCE [LARGE SCALE GENOMIC DNA]</scope>
    <source>
        <strain>ATCC 204508 / S288c</strain>
    </source>
</reference>
<reference key="4">
    <citation type="journal article" date="2014" name="G3 (Bethesda)">
        <title>The reference genome sequence of Saccharomyces cerevisiae: Then and now.</title>
        <authorList>
            <person name="Engel S.R."/>
            <person name="Dietrich F.S."/>
            <person name="Fisk D.G."/>
            <person name="Binkley G."/>
            <person name="Balakrishnan R."/>
            <person name="Costanzo M.C."/>
            <person name="Dwight S.S."/>
            <person name="Hitz B.C."/>
            <person name="Karra K."/>
            <person name="Nash R.S."/>
            <person name="Weng S."/>
            <person name="Wong E.D."/>
            <person name="Lloyd P."/>
            <person name="Skrzypek M.S."/>
            <person name="Miyasato S.R."/>
            <person name="Simison M."/>
            <person name="Cherry J.M."/>
        </authorList>
    </citation>
    <scope>GENOME REANNOTATION</scope>
    <source>
        <strain>ATCC 204508 / S288c</strain>
    </source>
</reference>
<reference key="5">
    <citation type="journal article" date="2006" name="Proc. Natl. Acad. Sci. U.S.A.">
        <title>A global topology map of the Saccharomyces cerevisiae membrane proteome.</title>
        <authorList>
            <person name="Kim H."/>
            <person name="Melen K."/>
            <person name="Oesterberg M."/>
            <person name="von Heijne G."/>
        </authorList>
    </citation>
    <scope>TOPOLOGY [LARGE SCALE ANALYSIS]</scope>
    <source>
        <strain>ATCC 208353 / W303-1A</strain>
    </source>
</reference>
<reference key="6">
    <citation type="journal article" date="2009" name="Science">
        <title>Global analysis of Cdk1 substrate phosphorylation sites provides insights into evolution.</title>
        <authorList>
            <person name="Holt L.J."/>
            <person name="Tuch B.B."/>
            <person name="Villen J."/>
            <person name="Johnson A.D."/>
            <person name="Gygi S.P."/>
            <person name="Morgan D.O."/>
        </authorList>
    </citation>
    <scope>PHOSPHORYLATION [LARGE SCALE ANALYSIS] AT SER-90</scope>
    <scope>IDENTIFICATION BY MASS SPECTROMETRY [LARGE SCALE ANALYSIS]</scope>
</reference>
<reference key="7">
    <citation type="journal article" date="2012" name="Proc. Natl. Acad. Sci. U.S.A.">
        <title>N-terminal acetylome analyses and functional insights of the N-terminal acetyltransferase NatB.</title>
        <authorList>
            <person name="Van Damme P."/>
            <person name="Lasa M."/>
            <person name="Polevoda B."/>
            <person name="Gazquez C."/>
            <person name="Elosegui-Artola A."/>
            <person name="Kim D.S."/>
            <person name="De Juan-Pardo E."/>
            <person name="Demeyer K."/>
            <person name="Hole K."/>
            <person name="Larrea E."/>
            <person name="Timmerman E."/>
            <person name="Prieto J."/>
            <person name="Arnesen T."/>
            <person name="Sherman F."/>
            <person name="Gevaert K."/>
            <person name="Aldabe R."/>
        </authorList>
    </citation>
    <scope>IDENTIFICATION BY MASS SPECTROMETRY [LARGE SCALE ANALYSIS]</scope>
</reference>
<feature type="chain" id="PRO_0000242140" description="Putative metabolite transport protein YDL199C">
    <location>
        <begin position="1"/>
        <end position="687"/>
    </location>
</feature>
<feature type="topological domain" description="Extracellular" evidence="1">
    <location>
        <begin position="1"/>
        <end position="122"/>
    </location>
</feature>
<feature type="transmembrane region" description="Helical" evidence="1">
    <location>
        <begin position="123"/>
        <end position="143"/>
    </location>
</feature>
<feature type="topological domain" description="Cytoplasmic" evidence="1">
    <location>
        <begin position="144"/>
        <end position="164"/>
    </location>
</feature>
<feature type="transmembrane region" description="Helical" evidence="1">
    <location>
        <begin position="165"/>
        <end position="185"/>
    </location>
</feature>
<feature type="topological domain" description="Extracellular" evidence="1">
    <location>
        <begin position="186"/>
        <end position="192"/>
    </location>
</feature>
<feature type="transmembrane region" description="Helical" evidence="1">
    <location>
        <begin position="193"/>
        <end position="213"/>
    </location>
</feature>
<feature type="topological domain" description="Cytoplasmic" evidence="1">
    <location>
        <begin position="214"/>
        <end position="216"/>
    </location>
</feature>
<feature type="transmembrane region" description="Helical" evidence="1">
    <location>
        <begin position="217"/>
        <end position="237"/>
    </location>
</feature>
<feature type="topological domain" description="Extracellular" evidence="1">
    <location>
        <begin position="238"/>
        <end position="251"/>
    </location>
</feature>
<feature type="transmembrane region" description="Helical" evidence="1">
    <location>
        <begin position="252"/>
        <end position="272"/>
    </location>
</feature>
<feature type="topological domain" description="Cytoplasmic" evidence="1">
    <location>
        <begin position="273"/>
        <end position="283"/>
    </location>
</feature>
<feature type="transmembrane region" description="Helical" evidence="1">
    <location>
        <begin position="284"/>
        <end position="304"/>
    </location>
</feature>
<feature type="topological domain" description="Extracellular" evidence="1">
    <location>
        <begin position="305"/>
        <end position="410"/>
    </location>
</feature>
<feature type="transmembrane region" description="Helical" evidence="1">
    <location>
        <begin position="411"/>
        <end position="431"/>
    </location>
</feature>
<feature type="topological domain" description="Cytoplasmic" evidence="1">
    <location>
        <begin position="432"/>
        <end position="439"/>
    </location>
</feature>
<feature type="transmembrane region" description="Helical" evidence="1">
    <location>
        <begin position="440"/>
        <end position="460"/>
    </location>
</feature>
<feature type="topological domain" description="Extracellular" evidence="1">
    <location>
        <begin position="461"/>
        <end position="469"/>
    </location>
</feature>
<feature type="transmembrane region" description="Helical" evidence="1">
    <location>
        <begin position="470"/>
        <end position="490"/>
    </location>
</feature>
<feature type="topological domain" description="Cytoplasmic" evidence="1">
    <location>
        <begin position="491"/>
        <end position="500"/>
    </location>
</feature>
<feature type="transmembrane region" description="Helical" evidence="1">
    <location>
        <begin position="501"/>
        <end position="521"/>
    </location>
</feature>
<feature type="topological domain" description="Extracellular" evidence="1">
    <location>
        <begin position="522"/>
        <end position="533"/>
    </location>
</feature>
<feature type="transmembrane region" description="Helical" evidence="1">
    <location>
        <begin position="534"/>
        <end position="554"/>
    </location>
</feature>
<feature type="topological domain" description="Cytoplasmic" evidence="1">
    <location>
        <begin position="555"/>
        <end position="687"/>
    </location>
</feature>
<feature type="region of interest" description="Disordered" evidence="2">
    <location>
        <begin position="1"/>
        <end position="22"/>
    </location>
</feature>
<feature type="region of interest" description="Disordered" evidence="2">
    <location>
        <begin position="561"/>
        <end position="587"/>
    </location>
</feature>
<feature type="region of interest" description="Disordered" evidence="2">
    <location>
        <begin position="654"/>
        <end position="687"/>
    </location>
</feature>
<feature type="compositionally biased region" description="Polar residues" evidence="2">
    <location>
        <begin position="7"/>
        <end position="22"/>
    </location>
</feature>
<feature type="compositionally biased region" description="Polar residues" evidence="2">
    <location>
        <begin position="660"/>
        <end position="673"/>
    </location>
</feature>
<feature type="modified residue" description="Phosphoserine" evidence="4">
    <location>
        <position position="90"/>
    </location>
</feature>
<keyword id="KW-0472">Membrane</keyword>
<keyword id="KW-0597">Phosphoprotein</keyword>
<keyword id="KW-1185">Reference proteome</keyword>
<keyword id="KW-0812">Transmembrane</keyword>
<keyword id="KW-1133">Transmembrane helix</keyword>
<keyword id="KW-0813">Transport</keyword>
<evidence type="ECO:0000255" key="1"/>
<evidence type="ECO:0000256" key="2">
    <source>
        <dbReference type="SAM" id="MobiDB-lite"/>
    </source>
</evidence>
<evidence type="ECO:0000305" key="3"/>
<evidence type="ECO:0007744" key="4">
    <source>
    </source>
</evidence>
<protein>
    <recommendedName>
        <fullName>Putative metabolite transport protein YDL199C</fullName>
    </recommendedName>
</protein>